<gene>
    <name evidence="1" type="primary">psbT</name>
</gene>
<sequence length="35" mass="4059">MEALVYTFLLVSTLGIIFFAIFFREPPKVPTKKLK</sequence>
<keyword id="KW-0150">Chloroplast</keyword>
<keyword id="KW-0472">Membrane</keyword>
<keyword id="KW-0602">Photosynthesis</keyword>
<keyword id="KW-0604">Photosystem II</keyword>
<keyword id="KW-0934">Plastid</keyword>
<keyword id="KW-0793">Thylakoid</keyword>
<keyword id="KW-0812">Transmembrane</keyword>
<keyword id="KW-1133">Transmembrane helix</keyword>
<accession>Q9GF98</accession>
<accession>A8SED0</accession>
<evidence type="ECO:0000255" key="1">
    <source>
        <dbReference type="HAMAP-Rule" id="MF_00808"/>
    </source>
</evidence>
<name>PSBT_CERDE</name>
<geneLocation type="chloroplast"/>
<dbReference type="EMBL" id="AF123847">
    <property type="protein sequence ID" value="AAG26266.1"/>
    <property type="molecule type" value="Genomic_DNA"/>
</dbReference>
<dbReference type="EMBL" id="EF614270">
    <property type="protein sequence ID" value="ABQ81478.1"/>
    <property type="molecule type" value="Genomic_DNA"/>
</dbReference>
<dbReference type="RefSeq" id="YP_001542474.1">
    <property type="nucleotide sequence ID" value="NC_009962.1"/>
</dbReference>
<dbReference type="SMR" id="Q9GF98"/>
<dbReference type="GeneID" id="5729448"/>
<dbReference type="GO" id="GO:0009535">
    <property type="term" value="C:chloroplast thylakoid membrane"/>
    <property type="evidence" value="ECO:0007669"/>
    <property type="project" value="UniProtKB-SubCell"/>
</dbReference>
<dbReference type="GO" id="GO:0009539">
    <property type="term" value="C:photosystem II reaction center"/>
    <property type="evidence" value="ECO:0007669"/>
    <property type="project" value="InterPro"/>
</dbReference>
<dbReference type="GO" id="GO:0015979">
    <property type="term" value="P:photosynthesis"/>
    <property type="evidence" value="ECO:0007669"/>
    <property type="project" value="UniProtKB-UniRule"/>
</dbReference>
<dbReference type="HAMAP" id="MF_00808">
    <property type="entry name" value="PSII_PsbT"/>
    <property type="match status" value="1"/>
</dbReference>
<dbReference type="InterPro" id="IPR001743">
    <property type="entry name" value="PSII_PsbT"/>
</dbReference>
<dbReference type="InterPro" id="IPR037268">
    <property type="entry name" value="PSII_PsbT_sf"/>
</dbReference>
<dbReference type="PANTHER" id="PTHR36411">
    <property type="match status" value="1"/>
</dbReference>
<dbReference type="PANTHER" id="PTHR36411:SF2">
    <property type="entry name" value="PHOTOSYSTEM II REACTION CENTER PROTEIN T"/>
    <property type="match status" value="1"/>
</dbReference>
<dbReference type="Pfam" id="PF01405">
    <property type="entry name" value="PsbT"/>
    <property type="match status" value="1"/>
</dbReference>
<dbReference type="SUPFAM" id="SSF161029">
    <property type="entry name" value="Photosystem II reaction center protein T, PsbT"/>
    <property type="match status" value="1"/>
</dbReference>
<comment type="function">
    <text evidence="1">Found at the monomer-monomer interface of the photosystem II (PS II) dimer, plays a role in assembly and dimerization of PSII. PSII is a light-driven water plastoquinone oxidoreductase, using light energy to abstract electrons from H(2)O, generating a proton gradient subsequently used for ATP formation.</text>
</comment>
<comment type="subunit">
    <text evidence="1">PSII is composed of 1 copy each of membrane proteins PsbA, PsbB, PsbC, PsbD, PsbE, PsbF, PsbH, PsbI, PsbJ, PsbK, PsbL, PsbM, PsbT, PsbY, PsbZ, Psb30/Ycf12, at least 3 peripheral proteins of the oxygen-evolving complex and a large number of cofactors. It forms dimeric complexes.</text>
</comment>
<comment type="subcellular location">
    <subcellularLocation>
        <location evidence="1">Plastid</location>
        <location evidence="1">Chloroplast thylakoid membrane</location>
        <topology evidence="1">Single-pass membrane protein</topology>
    </subcellularLocation>
</comment>
<comment type="similarity">
    <text evidence="1">Belongs to the PsbT family.</text>
</comment>
<feature type="chain" id="PRO_0000217914" description="Photosystem II reaction center protein T">
    <location>
        <begin position="1"/>
        <end position="35"/>
    </location>
</feature>
<feature type="transmembrane region" description="Helical" evidence="1">
    <location>
        <begin position="3"/>
        <end position="23"/>
    </location>
</feature>
<proteinExistence type="inferred from homology"/>
<reference key="1">
    <citation type="journal article" date="2000" name="Am. J. Bot.">
        <title>Utility of 17 chloroplast genes for inferring the phylogeny of the basal angiosperms.</title>
        <authorList>
            <person name="Graham S.W."/>
            <person name="Olmstead R.G."/>
        </authorList>
    </citation>
    <scope>NUCLEOTIDE SEQUENCE [GENOMIC DNA]</scope>
</reference>
<reference key="2">
    <citation type="journal article" date="2007" name="Proc. Natl. Acad. Sci. U.S.A.">
        <title>Using plastid genome-scale data to resolve enigmatic relationships among basal angiosperms.</title>
        <authorList>
            <person name="Moore M.J."/>
            <person name="Bell C.D."/>
            <person name="Soltis P.S."/>
            <person name="Soltis D.E."/>
        </authorList>
    </citation>
    <scope>NUCLEOTIDE SEQUENCE [LARGE SCALE GENOMIC DNA]</scope>
</reference>
<organism>
    <name type="scientific">Ceratophyllum demersum</name>
    <name type="common">Rigid hornwort</name>
    <name type="synonym">Coontail</name>
    <dbReference type="NCBI Taxonomy" id="4428"/>
    <lineage>
        <taxon>Eukaryota</taxon>
        <taxon>Viridiplantae</taxon>
        <taxon>Streptophyta</taxon>
        <taxon>Embryophyta</taxon>
        <taxon>Tracheophyta</taxon>
        <taxon>Spermatophyta</taxon>
        <taxon>Magnoliopsida</taxon>
        <taxon>Ceratophyllales</taxon>
        <taxon>Ceratophyllaceae</taxon>
        <taxon>Ceratophyllum</taxon>
    </lineage>
</organism>
<protein>
    <recommendedName>
        <fullName evidence="1">Photosystem II reaction center protein T</fullName>
        <shortName evidence="1">PSII-T</shortName>
    </recommendedName>
</protein>